<accession>Q9M2J5</accession>
<organism>
    <name type="scientific">Arabidopsis thaliana</name>
    <name type="common">Mouse-ear cress</name>
    <dbReference type="NCBI Taxonomy" id="3702"/>
    <lineage>
        <taxon>Eukaryota</taxon>
        <taxon>Viridiplantae</taxon>
        <taxon>Streptophyta</taxon>
        <taxon>Embryophyta</taxon>
        <taxon>Tracheophyta</taxon>
        <taxon>Spermatophyta</taxon>
        <taxon>Magnoliopsida</taxon>
        <taxon>eudicotyledons</taxon>
        <taxon>Gunneridae</taxon>
        <taxon>Pentapetalae</taxon>
        <taxon>rosids</taxon>
        <taxon>malvids</taxon>
        <taxon>Brassicales</taxon>
        <taxon>Brassicaceae</taxon>
        <taxon>Camelineae</taxon>
        <taxon>Arabidopsis</taxon>
    </lineage>
</organism>
<reference key="1">
    <citation type="journal article" date="2000" name="Nature">
        <title>Sequence and analysis of chromosome 3 of the plant Arabidopsis thaliana.</title>
        <authorList>
            <person name="Salanoubat M."/>
            <person name="Lemcke K."/>
            <person name="Rieger M."/>
            <person name="Ansorge W."/>
            <person name="Unseld M."/>
            <person name="Fartmann B."/>
            <person name="Valle G."/>
            <person name="Bloecker H."/>
            <person name="Perez-Alonso M."/>
            <person name="Obermaier B."/>
            <person name="Delseny M."/>
            <person name="Boutry M."/>
            <person name="Grivell L.A."/>
            <person name="Mache R."/>
            <person name="Puigdomenech P."/>
            <person name="De Simone V."/>
            <person name="Choisne N."/>
            <person name="Artiguenave F."/>
            <person name="Robert C."/>
            <person name="Brottier P."/>
            <person name="Wincker P."/>
            <person name="Cattolico L."/>
            <person name="Weissenbach J."/>
            <person name="Saurin W."/>
            <person name="Quetier F."/>
            <person name="Schaefer M."/>
            <person name="Mueller-Auer S."/>
            <person name="Gabel C."/>
            <person name="Fuchs M."/>
            <person name="Benes V."/>
            <person name="Wurmbach E."/>
            <person name="Drzonek H."/>
            <person name="Erfle H."/>
            <person name="Jordan N."/>
            <person name="Bangert S."/>
            <person name="Wiedelmann R."/>
            <person name="Kranz H."/>
            <person name="Voss H."/>
            <person name="Holland R."/>
            <person name="Brandt P."/>
            <person name="Nyakatura G."/>
            <person name="Vezzi A."/>
            <person name="D'Angelo M."/>
            <person name="Pallavicini A."/>
            <person name="Toppo S."/>
            <person name="Simionati B."/>
            <person name="Conrad A."/>
            <person name="Hornischer K."/>
            <person name="Kauer G."/>
            <person name="Loehnert T.-H."/>
            <person name="Nordsiek G."/>
            <person name="Reichelt J."/>
            <person name="Scharfe M."/>
            <person name="Schoen O."/>
            <person name="Bargues M."/>
            <person name="Terol J."/>
            <person name="Climent J."/>
            <person name="Navarro P."/>
            <person name="Collado C."/>
            <person name="Perez-Perez A."/>
            <person name="Ottenwaelder B."/>
            <person name="Duchemin D."/>
            <person name="Cooke R."/>
            <person name="Laudie M."/>
            <person name="Berger-Llauro C."/>
            <person name="Purnelle B."/>
            <person name="Masuy D."/>
            <person name="de Haan M."/>
            <person name="Maarse A.C."/>
            <person name="Alcaraz J.-P."/>
            <person name="Cottet A."/>
            <person name="Casacuberta E."/>
            <person name="Monfort A."/>
            <person name="Argiriou A."/>
            <person name="Flores M."/>
            <person name="Liguori R."/>
            <person name="Vitale D."/>
            <person name="Mannhaupt G."/>
            <person name="Haase D."/>
            <person name="Schoof H."/>
            <person name="Rudd S."/>
            <person name="Zaccaria P."/>
            <person name="Mewes H.-W."/>
            <person name="Mayer K.F.X."/>
            <person name="Kaul S."/>
            <person name="Town C.D."/>
            <person name="Koo H.L."/>
            <person name="Tallon L.J."/>
            <person name="Jenkins J."/>
            <person name="Rooney T."/>
            <person name="Rizzo M."/>
            <person name="Walts A."/>
            <person name="Utterback T."/>
            <person name="Fujii C.Y."/>
            <person name="Shea T.P."/>
            <person name="Creasy T.H."/>
            <person name="Haas B."/>
            <person name="Maiti R."/>
            <person name="Wu D."/>
            <person name="Peterson J."/>
            <person name="Van Aken S."/>
            <person name="Pai G."/>
            <person name="Militscher J."/>
            <person name="Sellers P."/>
            <person name="Gill J.E."/>
            <person name="Feldblyum T.V."/>
            <person name="Preuss D."/>
            <person name="Lin X."/>
            <person name="Nierman W.C."/>
            <person name="Salzberg S.L."/>
            <person name="White O."/>
            <person name="Venter J.C."/>
            <person name="Fraser C.M."/>
            <person name="Kaneko T."/>
            <person name="Nakamura Y."/>
            <person name="Sato S."/>
            <person name="Kato T."/>
            <person name="Asamizu E."/>
            <person name="Sasamoto S."/>
            <person name="Kimura T."/>
            <person name="Idesawa K."/>
            <person name="Kawashima K."/>
            <person name="Kishida Y."/>
            <person name="Kiyokawa C."/>
            <person name="Kohara M."/>
            <person name="Matsumoto M."/>
            <person name="Matsuno A."/>
            <person name="Muraki A."/>
            <person name="Nakayama S."/>
            <person name="Nakazaki N."/>
            <person name="Shinpo S."/>
            <person name="Takeuchi C."/>
            <person name="Wada T."/>
            <person name="Watanabe A."/>
            <person name="Yamada M."/>
            <person name="Yasuda M."/>
            <person name="Tabata S."/>
        </authorList>
    </citation>
    <scope>NUCLEOTIDE SEQUENCE [LARGE SCALE GENOMIC DNA]</scope>
    <source>
        <strain>cv. Columbia</strain>
    </source>
</reference>
<reference key="2">
    <citation type="journal article" date="2017" name="Plant J.">
        <title>Araport11: a complete reannotation of the Arabidopsis thaliana reference genome.</title>
        <authorList>
            <person name="Cheng C.Y."/>
            <person name="Krishnakumar V."/>
            <person name="Chan A.P."/>
            <person name="Thibaud-Nissen F."/>
            <person name="Schobel S."/>
            <person name="Town C.D."/>
        </authorList>
    </citation>
    <scope>GENOME REANNOTATION</scope>
    <source>
        <strain>cv. Columbia</strain>
    </source>
</reference>
<reference key="3">
    <citation type="journal article" date="2010" name="Plant Physiol.">
        <title>RTM3, which controls long-distance movement of potyviruses, is a member of a new plant gene family encoding a meprin and TRAF homology domain-containing protein.</title>
        <authorList>
            <person name="Cosson P."/>
            <person name="Sofer L."/>
            <person name="Le Q.H."/>
            <person name="Leger V."/>
            <person name="Schurdi-Levraud V."/>
            <person name="Whitham S.A."/>
            <person name="Yamamoto M.L."/>
            <person name="Gopalan S."/>
            <person name="Le Gall O."/>
            <person name="Candresse T."/>
            <person name="Carrington J.C."/>
            <person name="Revers F."/>
        </authorList>
    </citation>
    <scope>GENE FAMILY</scope>
</reference>
<dbReference type="EMBL" id="AL137081">
    <property type="protein sequence ID" value="CAB68159.1"/>
    <property type="molecule type" value="Genomic_DNA"/>
</dbReference>
<dbReference type="EMBL" id="CP002686">
    <property type="protein sequence ID" value="AEE79754.1"/>
    <property type="molecule type" value="Genomic_DNA"/>
</dbReference>
<dbReference type="PIR" id="T45981">
    <property type="entry name" value="T45981"/>
</dbReference>
<dbReference type="RefSeq" id="NP_191380.1">
    <property type="nucleotide sequence ID" value="NM_115683.2"/>
</dbReference>
<dbReference type="SMR" id="Q9M2J5"/>
<dbReference type="FunCoup" id="Q9M2J5">
    <property type="interactions" value="42"/>
</dbReference>
<dbReference type="STRING" id="3702.Q9M2J5"/>
<dbReference type="PaxDb" id="3702-AT3G58210.1"/>
<dbReference type="ProteomicsDB" id="238283"/>
<dbReference type="DNASU" id="824990"/>
<dbReference type="EnsemblPlants" id="AT3G58210.1">
    <property type="protein sequence ID" value="AT3G58210.1"/>
    <property type="gene ID" value="AT3G58210"/>
</dbReference>
<dbReference type="GeneID" id="824990"/>
<dbReference type="Gramene" id="AT3G58210.1">
    <property type="protein sequence ID" value="AT3G58210.1"/>
    <property type="gene ID" value="AT3G58210"/>
</dbReference>
<dbReference type="KEGG" id="ath:AT3G58210"/>
<dbReference type="Araport" id="AT3G58210"/>
<dbReference type="TAIR" id="AT3G58210"/>
<dbReference type="eggNOG" id="KOG1987">
    <property type="taxonomic scope" value="Eukaryota"/>
</dbReference>
<dbReference type="HOGENOM" id="CLU_026537_0_0_1"/>
<dbReference type="InParanoid" id="Q9M2J5"/>
<dbReference type="OMA" id="KICENSI"/>
<dbReference type="OrthoDB" id="289038at2759"/>
<dbReference type="PhylomeDB" id="Q9M2J5"/>
<dbReference type="PRO" id="PR:Q9M2J5"/>
<dbReference type="Proteomes" id="UP000006548">
    <property type="component" value="Chromosome 3"/>
</dbReference>
<dbReference type="ExpressionAtlas" id="Q9M2J5">
    <property type="expression patterns" value="baseline and differential"/>
</dbReference>
<dbReference type="CDD" id="cd00121">
    <property type="entry name" value="MATH"/>
    <property type="match status" value="1"/>
</dbReference>
<dbReference type="Gene3D" id="2.60.210.10">
    <property type="entry name" value="Apoptosis, Tumor Necrosis Factor Receptor Associated Protein 2, Chain A"/>
    <property type="match status" value="1"/>
</dbReference>
<dbReference type="InterPro" id="IPR050804">
    <property type="entry name" value="MATH-CC_domain_protein"/>
</dbReference>
<dbReference type="InterPro" id="IPR002083">
    <property type="entry name" value="MATH/TRAF_dom"/>
</dbReference>
<dbReference type="InterPro" id="IPR008974">
    <property type="entry name" value="TRAF-like"/>
</dbReference>
<dbReference type="PANTHER" id="PTHR46236">
    <property type="entry name" value="TRAF-LIKE SUPERFAMILY PROTEIN"/>
    <property type="match status" value="1"/>
</dbReference>
<dbReference type="PANTHER" id="PTHR46236:SF11">
    <property type="entry name" value="TRAF-LIKE SUPERFAMILY PROTEIN"/>
    <property type="match status" value="1"/>
</dbReference>
<dbReference type="Pfam" id="PF22486">
    <property type="entry name" value="MATH_2"/>
    <property type="match status" value="1"/>
</dbReference>
<dbReference type="SMART" id="SM00061">
    <property type="entry name" value="MATH"/>
    <property type="match status" value="1"/>
</dbReference>
<dbReference type="SUPFAM" id="SSF49599">
    <property type="entry name" value="TRAF domain-like"/>
    <property type="match status" value="1"/>
</dbReference>
<dbReference type="PROSITE" id="PS50144">
    <property type="entry name" value="MATH"/>
    <property type="match status" value="1"/>
</dbReference>
<keyword id="KW-0175">Coiled coil</keyword>
<keyword id="KW-1185">Reference proteome</keyword>
<evidence type="ECO:0000255" key="1"/>
<evidence type="ECO:0000255" key="2">
    <source>
        <dbReference type="PROSITE-ProRule" id="PRU00129"/>
    </source>
</evidence>
<feature type="chain" id="PRO_0000429293" description="MATH domain and coiled-coil domain-containing protein At3g58210">
    <location>
        <begin position="1"/>
        <end position="330"/>
    </location>
</feature>
<feature type="domain" description="MATH" evidence="2">
    <location>
        <begin position="6"/>
        <end position="133"/>
    </location>
</feature>
<feature type="coiled-coil region" evidence="1">
    <location>
        <begin position="263"/>
        <end position="314"/>
    </location>
</feature>
<gene>
    <name type="ordered locus">At3g58210</name>
    <name type="ORF">F9D24.120</name>
</gene>
<name>MCC16_ARATH</name>
<protein>
    <recommendedName>
        <fullName>MATH domain and coiled-coil domain-containing protein At3g58210</fullName>
    </recommendedName>
    <alternativeName>
        <fullName>RTM3-like protein At3g58210</fullName>
    </alternativeName>
</protein>
<sequence>MGNLVDNKFTWVIQNFSSSQSRVVPSNQFVIGGCKWRLLVYPEGFNKSGDHLSLFLEVADPRSLPPGWSRHARYLLTIVNQHSDKISKRNEATKWFNQKIPGWGLSAMIPLTKLHAKDGGFLVNDELKIVAEVNVLEVIGKLDVPEESEEETQVTQPMKKVKVDYDHVESNDLMINETPPVSELMDVNGFQVLPSQVDFVKRIFEKHPDIAKDFRPKNPHLRKACMNFLLSLMETLCQPPQKLSNEDLVEADNALTYVKVSGFKVDWLEKKLEEVKKKKEEEQTGEARIQELEEELKEFKQKCLDREAMLEKEKAKVLTARAPLTLDDVI</sequence>
<proteinExistence type="predicted"/>